<feature type="chain" id="PRO_1000017050" description="tRNA pseudouridine synthase A">
    <location>
        <begin position="1"/>
        <end position="270"/>
    </location>
</feature>
<feature type="active site" description="Nucleophile" evidence="1">
    <location>
        <position position="51"/>
    </location>
</feature>
<feature type="binding site" evidence="1">
    <location>
        <position position="109"/>
    </location>
    <ligand>
        <name>substrate</name>
    </ligand>
</feature>
<keyword id="KW-0413">Isomerase</keyword>
<keyword id="KW-0819">tRNA processing</keyword>
<gene>
    <name evidence="1" type="primary">truA</name>
    <name type="ordered locus">Bcen_4411</name>
</gene>
<comment type="function">
    <text evidence="1">Formation of pseudouridine at positions 38, 39 and 40 in the anticodon stem and loop of transfer RNAs.</text>
</comment>
<comment type="catalytic activity">
    <reaction evidence="1">
        <text>uridine(38/39/40) in tRNA = pseudouridine(38/39/40) in tRNA</text>
        <dbReference type="Rhea" id="RHEA:22376"/>
        <dbReference type="Rhea" id="RHEA-COMP:10085"/>
        <dbReference type="Rhea" id="RHEA-COMP:10087"/>
        <dbReference type="ChEBI" id="CHEBI:65314"/>
        <dbReference type="ChEBI" id="CHEBI:65315"/>
        <dbReference type="EC" id="5.4.99.12"/>
    </reaction>
</comment>
<comment type="subunit">
    <text evidence="1">Homodimer.</text>
</comment>
<comment type="similarity">
    <text evidence="1">Belongs to the tRNA pseudouridine synthase TruA family.</text>
</comment>
<organism>
    <name type="scientific">Burkholderia orbicola (strain AU 1054)</name>
    <dbReference type="NCBI Taxonomy" id="331271"/>
    <lineage>
        <taxon>Bacteria</taxon>
        <taxon>Pseudomonadati</taxon>
        <taxon>Pseudomonadota</taxon>
        <taxon>Betaproteobacteria</taxon>
        <taxon>Burkholderiales</taxon>
        <taxon>Burkholderiaceae</taxon>
        <taxon>Burkholderia</taxon>
        <taxon>Burkholderia cepacia complex</taxon>
        <taxon>Burkholderia orbicola</taxon>
    </lineage>
</organism>
<name>TRUA_BURO1</name>
<proteinExistence type="inferred from homology"/>
<protein>
    <recommendedName>
        <fullName evidence="1">tRNA pseudouridine synthase A</fullName>
        <ecNumber evidence="1">5.4.99.12</ecNumber>
    </recommendedName>
    <alternativeName>
        <fullName evidence="1">tRNA pseudouridine(38-40) synthase</fullName>
    </alternativeName>
    <alternativeName>
        <fullName evidence="1">tRNA pseudouridylate synthase I</fullName>
    </alternativeName>
    <alternativeName>
        <fullName evidence="1">tRNA-uridine isomerase I</fullName>
    </alternativeName>
</protein>
<accession>Q1BM62</accession>
<dbReference type="EC" id="5.4.99.12" evidence="1"/>
<dbReference type="EMBL" id="CP000379">
    <property type="protein sequence ID" value="ABF79293.1"/>
    <property type="molecule type" value="Genomic_DNA"/>
</dbReference>
<dbReference type="SMR" id="Q1BM62"/>
<dbReference type="HOGENOM" id="CLU_014673_0_2_4"/>
<dbReference type="GO" id="GO:0003723">
    <property type="term" value="F:RNA binding"/>
    <property type="evidence" value="ECO:0007669"/>
    <property type="project" value="InterPro"/>
</dbReference>
<dbReference type="GO" id="GO:0160147">
    <property type="term" value="F:tRNA pseudouridine(38-40) synthase activity"/>
    <property type="evidence" value="ECO:0007669"/>
    <property type="project" value="UniProtKB-EC"/>
</dbReference>
<dbReference type="GO" id="GO:0031119">
    <property type="term" value="P:tRNA pseudouridine synthesis"/>
    <property type="evidence" value="ECO:0007669"/>
    <property type="project" value="UniProtKB-UniRule"/>
</dbReference>
<dbReference type="CDD" id="cd02570">
    <property type="entry name" value="PseudoU_synth_EcTruA"/>
    <property type="match status" value="1"/>
</dbReference>
<dbReference type="FunFam" id="3.30.70.580:FF:000001">
    <property type="entry name" value="tRNA pseudouridine synthase A"/>
    <property type="match status" value="1"/>
</dbReference>
<dbReference type="Gene3D" id="3.30.70.660">
    <property type="entry name" value="Pseudouridine synthase I, catalytic domain, C-terminal subdomain"/>
    <property type="match status" value="1"/>
</dbReference>
<dbReference type="Gene3D" id="3.30.70.580">
    <property type="entry name" value="Pseudouridine synthase I, catalytic domain, N-terminal subdomain"/>
    <property type="match status" value="1"/>
</dbReference>
<dbReference type="HAMAP" id="MF_00171">
    <property type="entry name" value="TruA"/>
    <property type="match status" value="1"/>
</dbReference>
<dbReference type="InterPro" id="IPR020103">
    <property type="entry name" value="PsdUridine_synth_cat_dom_sf"/>
</dbReference>
<dbReference type="InterPro" id="IPR001406">
    <property type="entry name" value="PsdUridine_synth_TruA"/>
</dbReference>
<dbReference type="InterPro" id="IPR020097">
    <property type="entry name" value="PsdUridine_synth_TruA_a/b_dom"/>
</dbReference>
<dbReference type="InterPro" id="IPR020095">
    <property type="entry name" value="PsdUridine_synth_TruA_C"/>
</dbReference>
<dbReference type="InterPro" id="IPR020094">
    <property type="entry name" value="TruA/RsuA/RluB/E/F_N"/>
</dbReference>
<dbReference type="NCBIfam" id="TIGR00071">
    <property type="entry name" value="hisT_truA"/>
    <property type="match status" value="1"/>
</dbReference>
<dbReference type="PANTHER" id="PTHR11142">
    <property type="entry name" value="PSEUDOURIDYLATE SYNTHASE"/>
    <property type="match status" value="1"/>
</dbReference>
<dbReference type="PANTHER" id="PTHR11142:SF0">
    <property type="entry name" value="TRNA PSEUDOURIDINE SYNTHASE-LIKE 1"/>
    <property type="match status" value="1"/>
</dbReference>
<dbReference type="Pfam" id="PF01416">
    <property type="entry name" value="PseudoU_synth_1"/>
    <property type="match status" value="2"/>
</dbReference>
<dbReference type="PIRSF" id="PIRSF001430">
    <property type="entry name" value="tRNA_psdUrid_synth"/>
    <property type="match status" value="1"/>
</dbReference>
<dbReference type="SUPFAM" id="SSF55120">
    <property type="entry name" value="Pseudouridine synthase"/>
    <property type="match status" value="1"/>
</dbReference>
<sequence length="270" mass="30166">MRIALGIQYDGAAFCGWQAQPHGKTVQDRLEHALAEFARVPLHTTVAGRTDTGVHGLGQVVHFDTDLEREVFSWVRGTNAFLPSTVSVQWAKPMPDTFHARFSAFERTYYYALYVHPVRSPMLAGRAGWIHTPLDDDAMRAAAAHLIGEHDFSSFRSSECQSKTPVKHLYQIDVRRAGHFIHFRFRANAFLHHMVRNLMGCLVAVGRGRYPADWLADVLAGRDRNLAAPTFMADGLYLAHVGYPAEFAVPPAQLGSVPWSSVWADLDPQT</sequence>
<reference key="1">
    <citation type="submission" date="2006-05" db="EMBL/GenBank/DDBJ databases">
        <title>Complete sequence of chromosome 2 of Burkholderia cenocepacia AU 1054.</title>
        <authorList>
            <consortium name="US DOE Joint Genome Institute"/>
            <person name="Copeland A."/>
            <person name="Lucas S."/>
            <person name="Lapidus A."/>
            <person name="Barry K."/>
            <person name="Detter J.C."/>
            <person name="Glavina del Rio T."/>
            <person name="Hammon N."/>
            <person name="Israni S."/>
            <person name="Dalin E."/>
            <person name="Tice H."/>
            <person name="Pitluck S."/>
            <person name="Chain P."/>
            <person name="Malfatti S."/>
            <person name="Shin M."/>
            <person name="Vergez L."/>
            <person name="Schmutz J."/>
            <person name="Larimer F."/>
            <person name="Land M."/>
            <person name="Hauser L."/>
            <person name="Kyrpides N."/>
            <person name="Lykidis A."/>
            <person name="LiPuma J.J."/>
            <person name="Konstantinidis K."/>
            <person name="Tiedje J.M."/>
            <person name="Richardson P."/>
        </authorList>
    </citation>
    <scope>NUCLEOTIDE SEQUENCE [LARGE SCALE GENOMIC DNA]</scope>
    <source>
        <strain>AU 1054</strain>
    </source>
</reference>
<evidence type="ECO:0000255" key="1">
    <source>
        <dbReference type="HAMAP-Rule" id="MF_00171"/>
    </source>
</evidence>